<gene>
    <name evidence="1" type="primary">glnD</name>
    <name type="ordered locus">ECA1029</name>
</gene>
<sequence length="904" mass="104412">MTDKRFSPDNTPPDASSPDSPIDTIAAAQPPVSPLTYADDMLNCQALKQQLELFQLWLGSEFRSGVSAEKLIDARTLFIDRLLQRLWYCHGFENIAQTALVAVGGYGRGELHPLSDIDVLVLSQTELSDEHSQRVGQFITLLWDLKLEVGHSVRTLEECLQEGRADISVATNLIESRMICGDVALFLTLQKHVFSDEFWPSPTFFPAKITEQQERHQRYHSTSYNLEPDIKSSPGGLRDIHTLLWVARRHFGATSLNEMVGFGFLTEAERKELNECQSFLWRIRFALHLILPRYDNRLLFDRQLNVAQLLQYQGEGNTPVERMMKDFYRMTRRVSELNQMLLQLFDEAILALDASEKPRPIDDEFQLRGNLVDLRDENLFIKKPEAIMRMFYLMVRNRDISGIYSTTLRQLRHARRHLASPLCTIPEARQLFMNILRHPYAVSRALLPMHRHSVLWAYMPLWGNIVGQMQFDLFHAYTVDEHTIRVLLKLESFADEDTRPQHPLCVELYPRLPQPELLLLAALFHDIAKGRGGDHSELGALDVLEFAALHGLNSREAQLVSWLVRCHLLMSVTAQRRDIQDPTVIQQFATEVQSETRLRYLVSLTVADICATNETLWNSWKQSLLRELYFATEKQLRRGMQNTPDLRERVRHHRLQALALLRMDNIDEEALHHIWSRCRADYFLRHSPNQIAWHARHLLEHDTNKPLVLISHQASRGGTEIFIWSPDRPYLFAAVAGELDRRNLSVHDAQIFTSRDGMAMDTFIVLEPDGSPLAQDRHEMIRHALEQALTQRHYQHPRVRRTSPKLRHFSVPTEVNFLPTHTDRRSYMELSALDQPGLLARIGEIFSDLNLSLHGARISTIGERVEDLFILADSDRRALKPELRLKLQERLTEALNPNDKVPLS</sequence>
<name>GLND_PECAS</name>
<accession>Q6D8E5</accession>
<keyword id="KW-0378">Hydrolase</keyword>
<keyword id="KW-0460">Magnesium</keyword>
<keyword id="KW-0511">Multifunctional enzyme</keyword>
<keyword id="KW-0535">Nitrogen fixation</keyword>
<keyword id="KW-0548">Nucleotidyltransferase</keyword>
<keyword id="KW-1185">Reference proteome</keyword>
<keyword id="KW-0677">Repeat</keyword>
<keyword id="KW-0808">Transferase</keyword>
<proteinExistence type="inferred from homology"/>
<feature type="chain" id="PRO_0000192731" description="Bifunctional uridylyltransferase/uridylyl-removing enzyme">
    <location>
        <begin position="1"/>
        <end position="904"/>
    </location>
</feature>
<feature type="domain" description="HD" evidence="2">
    <location>
        <begin position="479"/>
        <end position="601"/>
    </location>
</feature>
<feature type="domain" description="ACT 1" evidence="1">
    <location>
        <begin position="720"/>
        <end position="801"/>
    </location>
</feature>
<feature type="domain" description="ACT 2" evidence="1">
    <location>
        <begin position="827"/>
        <end position="904"/>
    </location>
</feature>
<feature type="region of interest" description="Uridylyltransferase">
    <location>
        <begin position="1"/>
        <end position="360"/>
    </location>
</feature>
<feature type="region of interest" description="Disordered" evidence="3">
    <location>
        <begin position="1"/>
        <end position="23"/>
    </location>
</feature>
<feature type="region of interest" description="Uridylyl-removing">
    <location>
        <begin position="361"/>
        <end position="719"/>
    </location>
</feature>
<feature type="compositionally biased region" description="Low complexity" evidence="3">
    <location>
        <begin position="8"/>
        <end position="23"/>
    </location>
</feature>
<protein>
    <recommendedName>
        <fullName evidence="1">Bifunctional uridylyltransferase/uridylyl-removing enzyme</fullName>
        <shortName evidence="1">UTase/UR</shortName>
    </recommendedName>
    <alternativeName>
        <fullName evidence="1">Bifunctional [protein-PII] modification enzyme</fullName>
    </alternativeName>
    <alternativeName>
        <fullName evidence="1">Bifunctional nitrogen sensor protein</fullName>
    </alternativeName>
    <domain>
        <recommendedName>
            <fullName evidence="1">[Protein-PII] uridylyltransferase</fullName>
            <shortName evidence="1">PII uridylyltransferase</shortName>
            <shortName evidence="1">UTase</shortName>
            <ecNumber evidence="1">2.7.7.59</ecNumber>
        </recommendedName>
    </domain>
    <domain>
        <recommendedName>
            <fullName evidence="1">[Protein-PII]-UMP uridylyl-removing enzyme</fullName>
            <shortName evidence="1">UR</shortName>
            <ecNumber evidence="1">3.1.4.-</ecNumber>
        </recommendedName>
    </domain>
</protein>
<evidence type="ECO:0000255" key="1">
    <source>
        <dbReference type="HAMAP-Rule" id="MF_00277"/>
    </source>
</evidence>
<evidence type="ECO:0000255" key="2">
    <source>
        <dbReference type="PROSITE-ProRule" id="PRU01175"/>
    </source>
</evidence>
<evidence type="ECO:0000256" key="3">
    <source>
        <dbReference type="SAM" id="MobiDB-lite"/>
    </source>
</evidence>
<dbReference type="EC" id="2.7.7.59" evidence="1"/>
<dbReference type="EC" id="3.1.4.-" evidence="1"/>
<dbReference type="EMBL" id="BX950851">
    <property type="protein sequence ID" value="CAG73940.1"/>
    <property type="molecule type" value="Genomic_DNA"/>
</dbReference>
<dbReference type="RefSeq" id="WP_011092628.1">
    <property type="nucleotide sequence ID" value="NC_004547.2"/>
</dbReference>
<dbReference type="SMR" id="Q6D8E5"/>
<dbReference type="STRING" id="218491.ECA1029"/>
<dbReference type="GeneID" id="57207858"/>
<dbReference type="KEGG" id="eca:ECA1029"/>
<dbReference type="PATRIC" id="fig|218491.5.peg.1037"/>
<dbReference type="eggNOG" id="COG2844">
    <property type="taxonomic scope" value="Bacteria"/>
</dbReference>
<dbReference type="HOGENOM" id="CLU_012833_0_0_6"/>
<dbReference type="OrthoDB" id="9758038at2"/>
<dbReference type="Proteomes" id="UP000007966">
    <property type="component" value="Chromosome"/>
</dbReference>
<dbReference type="GO" id="GO:0008773">
    <property type="term" value="F:[protein-PII] uridylyltransferase activity"/>
    <property type="evidence" value="ECO:0007669"/>
    <property type="project" value="UniProtKB-UniRule"/>
</dbReference>
<dbReference type="GO" id="GO:0008081">
    <property type="term" value="F:phosphoric diester hydrolase activity"/>
    <property type="evidence" value="ECO:0007669"/>
    <property type="project" value="UniProtKB-UniRule"/>
</dbReference>
<dbReference type="GO" id="GO:0009399">
    <property type="term" value="P:nitrogen fixation"/>
    <property type="evidence" value="ECO:0007669"/>
    <property type="project" value="UniProtKB-UniRule"/>
</dbReference>
<dbReference type="GO" id="GO:0006808">
    <property type="term" value="P:regulation of nitrogen utilization"/>
    <property type="evidence" value="ECO:0007669"/>
    <property type="project" value="UniProtKB-UniRule"/>
</dbReference>
<dbReference type="CDD" id="cd04899">
    <property type="entry name" value="ACT_ACR-UUR-like_2"/>
    <property type="match status" value="1"/>
</dbReference>
<dbReference type="CDD" id="cd04900">
    <property type="entry name" value="ACT_UUR-like_1"/>
    <property type="match status" value="1"/>
</dbReference>
<dbReference type="CDD" id="cd00077">
    <property type="entry name" value="HDc"/>
    <property type="match status" value="1"/>
</dbReference>
<dbReference type="CDD" id="cd05401">
    <property type="entry name" value="NT_GlnE_GlnD_like"/>
    <property type="match status" value="1"/>
</dbReference>
<dbReference type="FunFam" id="1.10.3210.10:FF:000005">
    <property type="entry name" value="Bifunctional uridylyltransferase/uridylyl-removing enzyme"/>
    <property type="match status" value="1"/>
</dbReference>
<dbReference type="Gene3D" id="1.10.3210.10">
    <property type="entry name" value="Hypothetical protein af1432"/>
    <property type="match status" value="1"/>
</dbReference>
<dbReference type="HAMAP" id="MF_00277">
    <property type="entry name" value="PII_uridylyl_transf"/>
    <property type="match status" value="1"/>
</dbReference>
<dbReference type="InterPro" id="IPR045865">
    <property type="entry name" value="ACT-like_dom_sf"/>
</dbReference>
<dbReference type="InterPro" id="IPR002912">
    <property type="entry name" value="ACT_dom"/>
</dbReference>
<dbReference type="InterPro" id="IPR003607">
    <property type="entry name" value="HD/PDEase_dom"/>
</dbReference>
<dbReference type="InterPro" id="IPR006674">
    <property type="entry name" value="HD_domain"/>
</dbReference>
<dbReference type="InterPro" id="IPR043519">
    <property type="entry name" value="NT_sf"/>
</dbReference>
<dbReference type="InterPro" id="IPR013546">
    <property type="entry name" value="PII_UdlTrfase/GS_AdlTrfase"/>
</dbReference>
<dbReference type="InterPro" id="IPR002934">
    <property type="entry name" value="Polymerase_NTP_transf_dom"/>
</dbReference>
<dbReference type="InterPro" id="IPR010043">
    <property type="entry name" value="UTase/UR"/>
</dbReference>
<dbReference type="NCBIfam" id="NF002487">
    <property type="entry name" value="PRK01759.1"/>
    <property type="match status" value="1"/>
</dbReference>
<dbReference type="NCBIfam" id="NF003448">
    <property type="entry name" value="PRK05007.1"/>
    <property type="match status" value="1"/>
</dbReference>
<dbReference type="NCBIfam" id="TIGR01693">
    <property type="entry name" value="UTase_glnD"/>
    <property type="match status" value="1"/>
</dbReference>
<dbReference type="PANTHER" id="PTHR47320">
    <property type="entry name" value="BIFUNCTIONAL URIDYLYLTRANSFERASE/URIDYLYL-REMOVING ENZYME"/>
    <property type="match status" value="1"/>
</dbReference>
<dbReference type="PANTHER" id="PTHR47320:SF1">
    <property type="entry name" value="BIFUNCTIONAL URIDYLYLTRANSFERASE_URIDYLYL-REMOVING ENZYME"/>
    <property type="match status" value="1"/>
</dbReference>
<dbReference type="Pfam" id="PF01842">
    <property type="entry name" value="ACT"/>
    <property type="match status" value="2"/>
</dbReference>
<dbReference type="Pfam" id="PF08335">
    <property type="entry name" value="GlnD_UR_UTase"/>
    <property type="match status" value="1"/>
</dbReference>
<dbReference type="Pfam" id="PF01966">
    <property type="entry name" value="HD"/>
    <property type="match status" value="1"/>
</dbReference>
<dbReference type="Pfam" id="PF01909">
    <property type="entry name" value="NTP_transf_2"/>
    <property type="match status" value="1"/>
</dbReference>
<dbReference type="PIRSF" id="PIRSF006288">
    <property type="entry name" value="PII_uridyltransf"/>
    <property type="match status" value="1"/>
</dbReference>
<dbReference type="SMART" id="SM00471">
    <property type="entry name" value="HDc"/>
    <property type="match status" value="1"/>
</dbReference>
<dbReference type="SUPFAM" id="SSF55021">
    <property type="entry name" value="ACT-like"/>
    <property type="match status" value="2"/>
</dbReference>
<dbReference type="SUPFAM" id="SSF109604">
    <property type="entry name" value="HD-domain/PDEase-like"/>
    <property type="match status" value="1"/>
</dbReference>
<dbReference type="SUPFAM" id="SSF81301">
    <property type="entry name" value="Nucleotidyltransferase"/>
    <property type="match status" value="1"/>
</dbReference>
<dbReference type="SUPFAM" id="SSF81593">
    <property type="entry name" value="Nucleotidyltransferase substrate binding subunit/domain"/>
    <property type="match status" value="1"/>
</dbReference>
<dbReference type="SUPFAM" id="SSF81891">
    <property type="entry name" value="Poly A polymerase C-terminal region-like"/>
    <property type="match status" value="1"/>
</dbReference>
<dbReference type="PROSITE" id="PS51671">
    <property type="entry name" value="ACT"/>
    <property type="match status" value="2"/>
</dbReference>
<dbReference type="PROSITE" id="PS51831">
    <property type="entry name" value="HD"/>
    <property type="match status" value="1"/>
</dbReference>
<organism>
    <name type="scientific">Pectobacterium atrosepticum (strain SCRI 1043 / ATCC BAA-672)</name>
    <name type="common">Erwinia carotovora subsp. atroseptica</name>
    <dbReference type="NCBI Taxonomy" id="218491"/>
    <lineage>
        <taxon>Bacteria</taxon>
        <taxon>Pseudomonadati</taxon>
        <taxon>Pseudomonadota</taxon>
        <taxon>Gammaproteobacteria</taxon>
        <taxon>Enterobacterales</taxon>
        <taxon>Pectobacteriaceae</taxon>
        <taxon>Pectobacterium</taxon>
    </lineage>
</organism>
<comment type="function">
    <text evidence="1">Modifies, by uridylylation and deuridylylation, the PII regulatory proteins (GlnB and homologs), in response to the nitrogen status of the cell that GlnD senses through the glutamine level. Under low glutamine levels, catalyzes the conversion of the PII proteins and UTP to PII-UMP and PPi, while under higher glutamine levels, GlnD hydrolyzes PII-UMP to PII and UMP (deuridylylation). Thus, controls uridylylation state and activity of the PII proteins, and plays an important role in the regulation of nitrogen fixation and metabolism.</text>
</comment>
<comment type="catalytic activity">
    <reaction evidence="1">
        <text>[protein-PII]-L-tyrosine + UTP = [protein-PII]-uridylyl-L-tyrosine + diphosphate</text>
        <dbReference type="Rhea" id="RHEA:13673"/>
        <dbReference type="Rhea" id="RHEA-COMP:12147"/>
        <dbReference type="Rhea" id="RHEA-COMP:12148"/>
        <dbReference type="ChEBI" id="CHEBI:33019"/>
        <dbReference type="ChEBI" id="CHEBI:46398"/>
        <dbReference type="ChEBI" id="CHEBI:46858"/>
        <dbReference type="ChEBI" id="CHEBI:90602"/>
        <dbReference type="EC" id="2.7.7.59"/>
    </reaction>
</comment>
<comment type="catalytic activity">
    <reaction evidence="1">
        <text>[protein-PII]-uridylyl-L-tyrosine + H2O = [protein-PII]-L-tyrosine + UMP + H(+)</text>
        <dbReference type="Rhea" id="RHEA:48600"/>
        <dbReference type="Rhea" id="RHEA-COMP:12147"/>
        <dbReference type="Rhea" id="RHEA-COMP:12148"/>
        <dbReference type="ChEBI" id="CHEBI:15377"/>
        <dbReference type="ChEBI" id="CHEBI:15378"/>
        <dbReference type="ChEBI" id="CHEBI:46858"/>
        <dbReference type="ChEBI" id="CHEBI:57865"/>
        <dbReference type="ChEBI" id="CHEBI:90602"/>
    </reaction>
</comment>
<comment type="cofactor">
    <cofactor evidence="1">
        <name>Mg(2+)</name>
        <dbReference type="ChEBI" id="CHEBI:18420"/>
    </cofactor>
</comment>
<comment type="activity regulation">
    <text evidence="1">Uridylyltransferase (UTase) activity is inhibited by glutamine, while glutamine activates uridylyl-removing (UR) activity.</text>
</comment>
<comment type="domain">
    <text evidence="1">Has four distinct domains: an N-terminal nucleotidyltransferase (NT) domain responsible for UTase activity, a central HD domain that encodes UR activity, and two C-terminal ACT domains that seem to have a role in glutamine sensing.</text>
</comment>
<comment type="similarity">
    <text evidence="1">Belongs to the GlnD family.</text>
</comment>
<reference key="1">
    <citation type="journal article" date="2004" name="Proc. Natl. Acad. Sci. U.S.A.">
        <title>Genome sequence of the enterobacterial phytopathogen Erwinia carotovora subsp. atroseptica and characterization of virulence factors.</title>
        <authorList>
            <person name="Bell K.S."/>
            <person name="Sebaihia M."/>
            <person name="Pritchard L."/>
            <person name="Holden M.T.G."/>
            <person name="Hyman L.J."/>
            <person name="Holeva M.C."/>
            <person name="Thomson N.R."/>
            <person name="Bentley S.D."/>
            <person name="Churcher L.J.C."/>
            <person name="Mungall K."/>
            <person name="Atkin R."/>
            <person name="Bason N."/>
            <person name="Brooks K."/>
            <person name="Chillingworth T."/>
            <person name="Clark K."/>
            <person name="Doggett J."/>
            <person name="Fraser A."/>
            <person name="Hance Z."/>
            <person name="Hauser H."/>
            <person name="Jagels K."/>
            <person name="Moule S."/>
            <person name="Norbertczak H."/>
            <person name="Ormond D."/>
            <person name="Price C."/>
            <person name="Quail M.A."/>
            <person name="Sanders M."/>
            <person name="Walker D."/>
            <person name="Whitehead S."/>
            <person name="Salmond G.P.C."/>
            <person name="Birch P.R.J."/>
            <person name="Parkhill J."/>
            <person name="Toth I.K."/>
        </authorList>
    </citation>
    <scope>NUCLEOTIDE SEQUENCE [LARGE SCALE GENOMIC DNA]</scope>
    <source>
        <strain>SCRI 1043 / ATCC BAA-672</strain>
    </source>
</reference>